<feature type="chain" id="PRO_0000355829" description="Large ribosomal subunit protein uL14">
    <location>
        <begin position="1"/>
        <end position="121"/>
    </location>
</feature>
<proteinExistence type="inferred from homology"/>
<keyword id="KW-1185">Reference proteome</keyword>
<keyword id="KW-0687">Ribonucleoprotein</keyword>
<keyword id="KW-0689">Ribosomal protein</keyword>
<keyword id="KW-0694">RNA-binding</keyword>
<keyword id="KW-0699">rRNA-binding</keyword>
<evidence type="ECO:0000255" key="1">
    <source>
        <dbReference type="HAMAP-Rule" id="MF_01367"/>
    </source>
</evidence>
<evidence type="ECO:0000305" key="2"/>
<name>RL14_OPITP</name>
<organism>
    <name type="scientific">Opitutus terrae (strain DSM 11246 / JCM 15787 / PB90-1)</name>
    <dbReference type="NCBI Taxonomy" id="452637"/>
    <lineage>
        <taxon>Bacteria</taxon>
        <taxon>Pseudomonadati</taxon>
        <taxon>Verrucomicrobiota</taxon>
        <taxon>Opitutia</taxon>
        <taxon>Opitutales</taxon>
        <taxon>Opitutaceae</taxon>
        <taxon>Opitutus</taxon>
    </lineage>
</organism>
<gene>
    <name evidence="1" type="primary">rplN</name>
    <name type="ordered locus">Oter_0216</name>
</gene>
<comment type="function">
    <text evidence="1">Binds to 23S rRNA. Forms part of two intersubunit bridges in the 70S ribosome.</text>
</comment>
<comment type="subunit">
    <text evidence="1">Part of the 50S ribosomal subunit. Forms a cluster with proteins L3 and L19. In the 70S ribosome, L14 and L19 interact and together make contacts with the 16S rRNA in bridges B5 and B8.</text>
</comment>
<comment type="similarity">
    <text evidence="1">Belongs to the universal ribosomal protein uL14 family.</text>
</comment>
<accession>B1ZND8</accession>
<reference key="1">
    <citation type="journal article" date="2011" name="J. Bacteriol.">
        <title>Genome sequence of the verrucomicrobium Opitutus terrae PB90-1, an abundant inhabitant of rice paddy soil ecosystems.</title>
        <authorList>
            <person name="van Passel M.W."/>
            <person name="Kant R."/>
            <person name="Palva A."/>
            <person name="Copeland A."/>
            <person name="Lucas S."/>
            <person name="Lapidus A."/>
            <person name="Glavina del Rio T."/>
            <person name="Pitluck S."/>
            <person name="Goltsman E."/>
            <person name="Clum A."/>
            <person name="Sun H."/>
            <person name="Schmutz J."/>
            <person name="Larimer F.W."/>
            <person name="Land M.L."/>
            <person name="Hauser L."/>
            <person name="Kyrpides N."/>
            <person name="Mikhailova N."/>
            <person name="Richardson P.P."/>
            <person name="Janssen P.H."/>
            <person name="de Vos W.M."/>
            <person name="Smidt H."/>
        </authorList>
    </citation>
    <scope>NUCLEOTIDE SEQUENCE [LARGE SCALE GENOMIC DNA]</scope>
    <source>
        <strain>DSM 11246 / JCM 15787 / PB90-1</strain>
    </source>
</reference>
<protein>
    <recommendedName>
        <fullName evidence="1">Large ribosomal subunit protein uL14</fullName>
    </recommendedName>
    <alternativeName>
        <fullName evidence="2">50S ribosomal protein L14</fullName>
    </alternativeName>
</protein>
<dbReference type="EMBL" id="CP001032">
    <property type="protein sequence ID" value="ACB73507.1"/>
    <property type="molecule type" value="Genomic_DNA"/>
</dbReference>
<dbReference type="RefSeq" id="WP_012373045.1">
    <property type="nucleotide sequence ID" value="NC_010571.1"/>
</dbReference>
<dbReference type="SMR" id="B1ZND8"/>
<dbReference type="STRING" id="452637.Oter_0216"/>
<dbReference type="KEGG" id="ote:Oter_0216"/>
<dbReference type="eggNOG" id="COG0093">
    <property type="taxonomic scope" value="Bacteria"/>
</dbReference>
<dbReference type="HOGENOM" id="CLU_095071_2_1_0"/>
<dbReference type="OrthoDB" id="9806379at2"/>
<dbReference type="Proteomes" id="UP000007013">
    <property type="component" value="Chromosome"/>
</dbReference>
<dbReference type="GO" id="GO:0022625">
    <property type="term" value="C:cytosolic large ribosomal subunit"/>
    <property type="evidence" value="ECO:0007669"/>
    <property type="project" value="TreeGrafter"/>
</dbReference>
<dbReference type="GO" id="GO:0070180">
    <property type="term" value="F:large ribosomal subunit rRNA binding"/>
    <property type="evidence" value="ECO:0007669"/>
    <property type="project" value="TreeGrafter"/>
</dbReference>
<dbReference type="GO" id="GO:0003735">
    <property type="term" value="F:structural constituent of ribosome"/>
    <property type="evidence" value="ECO:0007669"/>
    <property type="project" value="InterPro"/>
</dbReference>
<dbReference type="GO" id="GO:0006412">
    <property type="term" value="P:translation"/>
    <property type="evidence" value="ECO:0007669"/>
    <property type="project" value="UniProtKB-UniRule"/>
</dbReference>
<dbReference type="CDD" id="cd00337">
    <property type="entry name" value="Ribosomal_uL14"/>
    <property type="match status" value="1"/>
</dbReference>
<dbReference type="Gene3D" id="2.40.150.20">
    <property type="entry name" value="Ribosomal protein L14"/>
    <property type="match status" value="1"/>
</dbReference>
<dbReference type="HAMAP" id="MF_01367">
    <property type="entry name" value="Ribosomal_uL14"/>
    <property type="match status" value="1"/>
</dbReference>
<dbReference type="InterPro" id="IPR000218">
    <property type="entry name" value="Ribosomal_uL14"/>
</dbReference>
<dbReference type="InterPro" id="IPR005745">
    <property type="entry name" value="Ribosomal_uL14_bac-type"/>
</dbReference>
<dbReference type="InterPro" id="IPR019972">
    <property type="entry name" value="Ribosomal_uL14_CS"/>
</dbReference>
<dbReference type="InterPro" id="IPR036853">
    <property type="entry name" value="Ribosomal_uL14_sf"/>
</dbReference>
<dbReference type="NCBIfam" id="TIGR01067">
    <property type="entry name" value="rplN_bact"/>
    <property type="match status" value="1"/>
</dbReference>
<dbReference type="PANTHER" id="PTHR11761">
    <property type="entry name" value="50S/60S RIBOSOMAL PROTEIN L14/L23"/>
    <property type="match status" value="1"/>
</dbReference>
<dbReference type="PANTHER" id="PTHR11761:SF3">
    <property type="entry name" value="LARGE RIBOSOMAL SUBUNIT PROTEIN UL14M"/>
    <property type="match status" value="1"/>
</dbReference>
<dbReference type="Pfam" id="PF00238">
    <property type="entry name" value="Ribosomal_L14"/>
    <property type="match status" value="1"/>
</dbReference>
<dbReference type="SMART" id="SM01374">
    <property type="entry name" value="Ribosomal_L14"/>
    <property type="match status" value="1"/>
</dbReference>
<dbReference type="SUPFAM" id="SSF50193">
    <property type="entry name" value="Ribosomal protein L14"/>
    <property type="match status" value="1"/>
</dbReference>
<dbReference type="PROSITE" id="PS00049">
    <property type="entry name" value="RIBOSOMAL_L14"/>
    <property type="match status" value="1"/>
</dbReference>
<sequence>MIQLRSVLDVADNTGARKAAMISRKGQITATAGVGDIITVHIKQSSTEATVKKGEVHKAVVVRTKAPVRRADGSYLRFDSNAVVIIDPTNNPRGTRIFGPVARELRAKNFMKIISLAPEVL</sequence>